<organism>
    <name type="scientific">Histophilus somni (strain 129Pt)</name>
    <name type="common">Haemophilus somnus</name>
    <dbReference type="NCBI Taxonomy" id="205914"/>
    <lineage>
        <taxon>Bacteria</taxon>
        <taxon>Pseudomonadati</taxon>
        <taxon>Pseudomonadota</taxon>
        <taxon>Gammaproteobacteria</taxon>
        <taxon>Pasteurellales</taxon>
        <taxon>Pasteurellaceae</taxon>
        <taxon>Histophilus</taxon>
    </lineage>
</organism>
<evidence type="ECO:0000255" key="1">
    <source>
        <dbReference type="HAMAP-Rule" id="MF_00374"/>
    </source>
</evidence>
<evidence type="ECO:0000305" key="2"/>
<protein>
    <recommendedName>
        <fullName evidence="1">Large ribosomal subunit protein uL29</fullName>
    </recommendedName>
    <alternativeName>
        <fullName evidence="2">50S ribosomal protein L29</fullName>
    </alternativeName>
</protein>
<feature type="chain" id="PRO_1000007494" description="Large ribosomal subunit protein uL29">
    <location>
        <begin position="1"/>
        <end position="63"/>
    </location>
</feature>
<accession>Q0I155</accession>
<sequence length="63" mass="7104">MKAQELRTKTVEELNAELVNLLGEQFKLRMQAATGQLQQTHQLKQVRRSIAQVKTVLTEKAGA</sequence>
<reference key="1">
    <citation type="journal article" date="2007" name="J. Bacteriol.">
        <title>Complete genome sequence of Haemophilus somnus (Histophilus somni) strain 129Pt and comparison to Haemophilus ducreyi 35000HP and Haemophilus influenzae Rd.</title>
        <authorList>
            <person name="Challacombe J.F."/>
            <person name="Duncan A.J."/>
            <person name="Brettin T.S."/>
            <person name="Bruce D."/>
            <person name="Chertkov O."/>
            <person name="Detter J.C."/>
            <person name="Han C.S."/>
            <person name="Misra M."/>
            <person name="Richardson P."/>
            <person name="Tapia R."/>
            <person name="Thayer N."/>
            <person name="Xie G."/>
            <person name="Inzana T.J."/>
        </authorList>
    </citation>
    <scope>NUCLEOTIDE SEQUENCE [LARGE SCALE GENOMIC DNA]</scope>
    <source>
        <strain>129Pt</strain>
    </source>
</reference>
<name>RL29_HISS1</name>
<dbReference type="EMBL" id="CP000436">
    <property type="protein sequence ID" value="ABI24348.1"/>
    <property type="molecule type" value="Genomic_DNA"/>
</dbReference>
<dbReference type="SMR" id="Q0I155"/>
<dbReference type="KEGG" id="hso:HS_0067"/>
<dbReference type="eggNOG" id="COG0255">
    <property type="taxonomic scope" value="Bacteria"/>
</dbReference>
<dbReference type="HOGENOM" id="CLU_158491_1_2_6"/>
<dbReference type="GO" id="GO:0022625">
    <property type="term" value="C:cytosolic large ribosomal subunit"/>
    <property type="evidence" value="ECO:0007669"/>
    <property type="project" value="TreeGrafter"/>
</dbReference>
<dbReference type="GO" id="GO:0003735">
    <property type="term" value="F:structural constituent of ribosome"/>
    <property type="evidence" value="ECO:0007669"/>
    <property type="project" value="InterPro"/>
</dbReference>
<dbReference type="GO" id="GO:0006412">
    <property type="term" value="P:translation"/>
    <property type="evidence" value="ECO:0007669"/>
    <property type="project" value="UniProtKB-UniRule"/>
</dbReference>
<dbReference type="CDD" id="cd00427">
    <property type="entry name" value="Ribosomal_L29_HIP"/>
    <property type="match status" value="1"/>
</dbReference>
<dbReference type="FunFam" id="1.10.287.310:FF:000001">
    <property type="entry name" value="50S ribosomal protein L29"/>
    <property type="match status" value="1"/>
</dbReference>
<dbReference type="Gene3D" id="1.10.287.310">
    <property type="match status" value="1"/>
</dbReference>
<dbReference type="HAMAP" id="MF_00374">
    <property type="entry name" value="Ribosomal_uL29"/>
    <property type="match status" value="1"/>
</dbReference>
<dbReference type="InterPro" id="IPR050063">
    <property type="entry name" value="Ribosomal_protein_uL29"/>
</dbReference>
<dbReference type="InterPro" id="IPR001854">
    <property type="entry name" value="Ribosomal_uL29"/>
</dbReference>
<dbReference type="InterPro" id="IPR018254">
    <property type="entry name" value="Ribosomal_uL29_CS"/>
</dbReference>
<dbReference type="InterPro" id="IPR036049">
    <property type="entry name" value="Ribosomal_uL29_sf"/>
</dbReference>
<dbReference type="NCBIfam" id="TIGR00012">
    <property type="entry name" value="L29"/>
    <property type="match status" value="1"/>
</dbReference>
<dbReference type="PANTHER" id="PTHR10916">
    <property type="entry name" value="60S RIBOSOMAL PROTEIN L35/50S RIBOSOMAL PROTEIN L29"/>
    <property type="match status" value="1"/>
</dbReference>
<dbReference type="PANTHER" id="PTHR10916:SF0">
    <property type="entry name" value="LARGE RIBOSOMAL SUBUNIT PROTEIN UL29C"/>
    <property type="match status" value="1"/>
</dbReference>
<dbReference type="Pfam" id="PF00831">
    <property type="entry name" value="Ribosomal_L29"/>
    <property type="match status" value="1"/>
</dbReference>
<dbReference type="SUPFAM" id="SSF46561">
    <property type="entry name" value="Ribosomal protein L29 (L29p)"/>
    <property type="match status" value="1"/>
</dbReference>
<dbReference type="PROSITE" id="PS00579">
    <property type="entry name" value="RIBOSOMAL_L29"/>
    <property type="match status" value="1"/>
</dbReference>
<keyword id="KW-0687">Ribonucleoprotein</keyword>
<keyword id="KW-0689">Ribosomal protein</keyword>
<proteinExistence type="inferred from homology"/>
<gene>
    <name evidence="1" type="primary">rpmC</name>
    <name type="ordered locus">HS_0067</name>
</gene>
<comment type="similarity">
    <text evidence="1">Belongs to the universal ribosomal protein uL29 family.</text>
</comment>